<reference key="1">
    <citation type="journal article" date="2019" name="Toxins">
        <title>Sa12b peptide from solitary wasp inhibits ASIC currents in rat dorsal root ganglion neurons.</title>
        <authorList>
            <person name="Hernandez C."/>
            <person name="Konno K."/>
            <person name="Salceda E."/>
            <person name="Vega R."/>
            <person name="Zaharenko A.J."/>
            <person name="Soto E."/>
        </authorList>
    </citation>
    <scope>PROTEIN SEQUENCE</scope>
    <scope>SUBCELLULAR LOCATION</scope>
    <scope>IDENTIFICATION BY MASS SPECTROMETRY</scope>
    <scope>FUNCTION</scope>
    <scope>SYNTHESIS</scope>
    <source>
        <tissue>Venom</tissue>
    </source>
</reference>
<reference key="2">
    <citation type="journal article" date="2012" name="Toxicon">
        <title>96. Chemical and biological characterization of a novel neuropeptide in the venom of solitary digger wasp.</title>
        <authorList>
            <person name="Nihei K.-I."/>
            <person name="Kazuma K."/>
            <person name="Ando K."/>
            <person name="Konno K."/>
        </authorList>
    </citation>
    <scope>PROTEIN SEQUENCE</scope>
    <scope>SUBCELLULAR LOCATION</scope>
    <scope>IDENTIFICATION BY MASS SPECTROMETRY</scope>
    <scope>FUNCTION</scope>
    <scope>PARTIAL AMIDATION AT PHE-10</scope>
</reference>
<reference key="3">
    <citation type="journal article" date="2021" name="Peptides">
        <title>Isolation and characterization of FMRFamide-like peptides in the venoms of solitary sphecid wasps.</title>
        <authorList>
            <person name="Nihei K.I."/>
            <person name="Peigneur S."/>
            <person name="Tytgat J."/>
            <person name="Lange A.B."/>
            <person name="Konno K."/>
        </authorList>
    </citation>
    <scope>PROTEIN SEQUENCE</scope>
    <scope>SUBCELLULAR LOCATION</scope>
    <scope>PARTIAL AMIDATION AT PHE-10</scope>
    <scope>MASS SPECTROMETRY</scope>
    <scope>SYNTHESIS</scope>
    <scope>FUNCTION</scope>
    <source>
        <tissue>Venom</tissue>
    </source>
</reference>
<reference key="4">
    <citation type="journal article" date="2016" name="Toxins">
        <title>Peptide toxins in solitary wasp venoms.</title>
        <authorList>
            <person name="Konno K."/>
            <person name="Kazuma K."/>
            <person name="Nihei K."/>
        </authorList>
    </citation>
    <scope>REVIEW</scope>
</reference>
<protein>
    <recommendedName>
        <fullName evidence="5">FMRFamide-like peptide Sa12b</fullName>
        <shortName evidence="4">Sa-12</shortName>
        <shortName evidence="6">Sa12b</shortName>
    </recommendedName>
    <alternativeName>
        <fullName evidence="4">Sa-112</fullName>
        <shortName evidence="6">Sa112</shortName>
    </alternativeName>
</protein>
<name>FLP12_SPHAA</name>
<evidence type="ECO:0000269" key="1">
    <source>
    </source>
</evidence>
<evidence type="ECO:0000269" key="2">
    <source>
    </source>
</evidence>
<evidence type="ECO:0000269" key="3">
    <source ref="2"/>
</evidence>
<evidence type="ECO:0000303" key="4">
    <source>
    </source>
</evidence>
<evidence type="ECO:0000303" key="5">
    <source>
    </source>
</evidence>
<evidence type="ECO:0000303" key="6">
    <source>
    </source>
</evidence>
<evidence type="ECO:0000305" key="7"/>
<evidence type="ECO:0000305" key="8">
    <source>
    </source>
</evidence>
<evidence type="ECO:0000305" key="9">
    <source>
    </source>
</evidence>
<evidence type="ECO:0000305" key="10">
    <source>
    </source>
</evidence>
<evidence type="ECO:0000305" key="11">
    <source ref="2"/>
</evidence>
<keyword id="KW-0027">Amidation</keyword>
<keyword id="KW-0903">Direct protein sequencing</keyword>
<keyword id="KW-0872">Ion channel impairing toxin</keyword>
<keyword id="KW-0528">Neurotoxin</keyword>
<keyword id="KW-1275">Proton-gated sodium channel impairing toxin</keyword>
<keyword id="KW-0964">Secreted</keyword>
<keyword id="KW-0800">Toxin</keyword>
<organism>
    <name type="scientific">Sphex argentatus argentatus</name>
    <name type="common">Black digger wasp</name>
    <dbReference type="NCBI Taxonomy" id="2838366"/>
    <lineage>
        <taxon>Eukaryota</taxon>
        <taxon>Metazoa</taxon>
        <taxon>Ecdysozoa</taxon>
        <taxon>Arthropoda</taxon>
        <taxon>Hexapoda</taxon>
        <taxon>Insecta</taxon>
        <taxon>Pterygota</taxon>
        <taxon>Neoptera</taxon>
        <taxon>Endopterygota</taxon>
        <taxon>Hymenoptera</taxon>
        <taxon>Apocrita</taxon>
        <taxon>Aculeata</taxon>
        <taxon>Apoidea</taxon>
        <taxon>Sphecidae</taxon>
        <taxon>Sphecinae</taxon>
        <taxon>Sphecina</taxon>
        <taxon>Sphex</taxon>
    </lineage>
</organism>
<feature type="peptide" id="PRO_0000453656" description="FMRFamide-like peptide Sa12b" evidence="1 3">
    <location>
        <begin position="1"/>
        <end position="10"/>
    </location>
</feature>
<feature type="modified residue" description="Phenylalanine amide; partial" evidence="1 3 8">
    <location>
        <position position="10"/>
    </location>
</feature>
<proteinExistence type="evidence at protein level"/>
<accession>P0DUV1</accession>
<sequence length="10" mass="1276">EDVDHVFLRF</sequence>
<dbReference type="GO" id="GO:0005576">
    <property type="term" value="C:extracellular region"/>
    <property type="evidence" value="ECO:0007669"/>
    <property type="project" value="UniProtKB-SubCell"/>
</dbReference>
<dbReference type="GO" id="GO:0099106">
    <property type="term" value="F:ion channel regulator activity"/>
    <property type="evidence" value="ECO:0007669"/>
    <property type="project" value="UniProtKB-KW"/>
</dbReference>
<dbReference type="GO" id="GO:0090729">
    <property type="term" value="F:toxin activity"/>
    <property type="evidence" value="ECO:0007669"/>
    <property type="project" value="UniProtKB-KW"/>
</dbReference>
<comment type="function">
    <text evidence="1 2 3 10">May be directly involved in a paralyzing effect, by inhibiting muscle contraction, or may also act centrally to modulate prey behaviors (Probable). The non-amidated form (Sa12b) potently inhibits ASIC current in rat DRG neurons (IC(50)=81 nM) when preincubated before activation by acidic pH (PubMed:31658776). Has no consistent action on the time course of desensitization or the sustained component of the current (PubMed:31658776). Has no activity when coapplied with acidic pH, suggesting that the peptide needs to interact with the channel during its closed state (PubMed:31658776). This effect is concentration-dependent and reversed after washout of the peptide (PubMed:31658776). Since the inhibition is almost complete at 1 uM and all ASIC subunits are expressed in dorsal root ganglion (DRG) neurons, it suggests that it inhibits different ASIC subunits without an apparent selectivity (PubMed:31658776). It is noteworthy that it does not show activity on the locust oviduct contraction (tested at 50 nM), in contrast to the amidated form (PubMed:34023397, Ref.2).</text>
</comment>
<comment type="function">
    <text evidence="2 3">The amidated form (Sa112) inhibits both the frequency and amplitude of spontaneous contractions of the locust oviducts (tested at 50 nM).</text>
</comment>
<comment type="subcellular location">
    <subcellularLocation>
        <location evidence="1 2 3">Secreted</location>
    </subcellularLocation>
</comment>
<comment type="tissue specificity">
    <text evidence="9 10 11">Expressed by the venom gland.</text>
</comment>
<comment type="PTM">
    <text evidence="8 10">Is either amidated (Sa112) or non-amidated (Sa12b).</text>
</comment>
<comment type="mass spectrometry" mass="1274.7" method="MALDI" evidence="2">
    <text>amidated form (Sa112), Monoisotopic mass.</text>
</comment>
<comment type="mass spectrometry" mass="1275.6" method="MALDI" evidence="2">
    <text>non-amidated form (Sa12b), Monoisotopic mass.</text>
</comment>
<comment type="similarity">
    <text evidence="7">Belongs to the FARP (FMRFamide related peptide) family.</text>
</comment>